<protein>
    <recommendedName>
        <fullName evidence="1">UPF0154 protein EF_1734</fullName>
    </recommendedName>
</protein>
<name>Y1734_ENTFA</name>
<proteinExistence type="inferred from homology"/>
<accession>Q834D2</accession>
<gene>
    <name type="ordered locus">EF_1734</name>
</gene>
<organism>
    <name type="scientific">Enterococcus faecalis (strain ATCC 700802 / V583)</name>
    <dbReference type="NCBI Taxonomy" id="226185"/>
    <lineage>
        <taxon>Bacteria</taxon>
        <taxon>Bacillati</taxon>
        <taxon>Bacillota</taxon>
        <taxon>Bacilli</taxon>
        <taxon>Lactobacillales</taxon>
        <taxon>Enterococcaceae</taxon>
        <taxon>Enterococcus</taxon>
    </lineage>
</organism>
<comment type="subcellular location">
    <subcellularLocation>
        <location evidence="1">Membrane</location>
        <topology evidence="1">Single-pass membrane protein</topology>
    </subcellularLocation>
</comment>
<comment type="similarity">
    <text evidence="1">Belongs to the UPF0154 family.</text>
</comment>
<dbReference type="EMBL" id="AE016830">
    <property type="protein sequence ID" value="AAO81508.1"/>
    <property type="molecule type" value="Genomic_DNA"/>
</dbReference>
<dbReference type="RefSeq" id="NP_815438.1">
    <property type="nucleotide sequence ID" value="NC_004668.1"/>
</dbReference>
<dbReference type="RefSeq" id="WP_002357397.1">
    <property type="nucleotide sequence ID" value="NZ_KE136528.1"/>
</dbReference>
<dbReference type="SMR" id="Q834D2"/>
<dbReference type="STRING" id="226185.EF_1734"/>
<dbReference type="EnsemblBacteria" id="AAO81508">
    <property type="protein sequence ID" value="AAO81508"/>
    <property type="gene ID" value="EF_1734"/>
</dbReference>
<dbReference type="KEGG" id="efa:EF1734"/>
<dbReference type="PATRIC" id="fig|226185.45.peg.1779"/>
<dbReference type="eggNOG" id="COG3763">
    <property type="taxonomic scope" value="Bacteria"/>
</dbReference>
<dbReference type="HOGENOM" id="CLU_180108_0_1_9"/>
<dbReference type="Proteomes" id="UP000001415">
    <property type="component" value="Chromosome"/>
</dbReference>
<dbReference type="GO" id="GO:0005886">
    <property type="term" value="C:plasma membrane"/>
    <property type="evidence" value="ECO:0007669"/>
    <property type="project" value="UniProtKB-UniRule"/>
</dbReference>
<dbReference type="HAMAP" id="MF_00363">
    <property type="entry name" value="UPF0154"/>
    <property type="match status" value="1"/>
</dbReference>
<dbReference type="InterPro" id="IPR005359">
    <property type="entry name" value="UPF0154"/>
</dbReference>
<dbReference type="Pfam" id="PF03672">
    <property type="entry name" value="UPF0154"/>
    <property type="match status" value="1"/>
</dbReference>
<keyword id="KW-0472">Membrane</keyword>
<keyword id="KW-1185">Reference proteome</keyword>
<keyword id="KW-0812">Transmembrane</keyword>
<keyword id="KW-1133">Transmembrane helix</keyword>
<feature type="chain" id="PRO_0000214961" description="UPF0154 protein EF_1734">
    <location>
        <begin position="1"/>
        <end position="72"/>
    </location>
</feature>
<feature type="transmembrane region" description="Helical" evidence="1">
    <location>
        <begin position="4"/>
        <end position="26"/>
    </location>
</feature>
<evidence type="ECO:0000255" key="1">
    <source>
        <dbReference type="HAMAP-Rule" id="MF_00363"/>
    </source>
</evidence>
<reference key="1">
    <citation type="journal article" date="2003" name="Science">
        <title>Role of mobile DNA in the evolution of vancomycin-resistant Enterococcus faecalis.</title>
        <authorList>
            <person name="Paulsen I.T."/>
            <person name="Banerjei L."/>
            <person name="Myers G.S.A."/>
            <person name="Nelson K.E."/>
            <person name="Seshadri R."/>
            <person name="Read T.D."/>
            <person name="Fouts D.E."/>
            <person name="Eisen J.A."/>
            <person name="Gill S.R."/>
            <person name="Heidelberg J.F."/>
            <person name="Tettelin H."/>
            <person name="Dodson R.J."/>
            <person name="Umayam L.A."/>
            <person name="Brinkac L.M."/>
            <person name="Beanan M.J."/>
            <person name="Daugherty S.C."/>
            <person name="DeBoy R.T."/>
            <person name="Durkin S.A."/>
            <person name="Kolonay J.F."/>
            <person name="Madupu R."/>
            <person name="Nelson W.C."/>
            <person name="Vamathevan J.J."/>
            <person name="Tran B."/>
            <person name="Upton J."/>
            <person name="Hansen T."/>
            <person name="Shetty J."/>
            <person name="Khouri H.M."/>
            <person name="Utterback T.R."/>
            <person name="Radune D."/>
            <person name="Ketchum K.A."/>
            <person name="Dougherty B.A."/>
            <person name="Fraser C.M."/>
        </authorList>
    </citation>
    <scope>NUCLEOTIDE SEQUENCE [LARGE SCALE GENOMIC DNA]</scope>
    <source>
        <strain>ATCC 700802 / V583</strain>
    </source>
</reference>
<sequence>MATGWVVLIAVIALLVGAAGGFFLARKYMQDYFKKNPPVNEDMLRMMMASMGQKPSEKKVRQMMQQMKNQGK</sequence>